<evidence type="ECO:0000250" key="1"/>
<evidence type="ECO:0000250" key="2">
    <source>
        <dbReference type="UniProtKB" id="P03332"/>
    </source>
</evidence>
<evidence type="ECO:0000250" key="3">
    <source>
        <dbReference type="UniProtKB" id="P03336"/>
    </source>
</evidence>
<evidence type="ECO:0000250" key="4">
    <source>
        <dbReference type="UniProtKB" id="P03355"/>
    </source>
</evidence>
<evidence type="ECO:0000255" key="5"/>
<evidence type="ECO:0000255" key="6">
    <source>
        <dbReference type="PROSITE-ProRule" id="PRU00047"/>
    </source>
</evidence>
<evidence type="ECO:0000256" key="7">
    <source>
        <dbReference type="SAM" id="MobiDB-lite"/>
    </source>
</evidence>
<evidence type="ECO:0000305" key="8"/>
<evidence type="ECO:0000305" key="9">
    <source>
    </source>
</evidence>
<evidence type="ECO:0000305" key="10">
    <source>
    </source>
</evidence>
<dbReference type="EMBL" id="DQ241301">
    <property type="protein sequence ID" value="ABB83224.1"/>
    <property type="molecule type" value="Genomic_RNA"/>
</dbReference>
<dbReference type="SMR" id="Q2F7J2"/>
<dbReference type="Proteomes" id="UP000008601">
    <property type="component" value="Genome"/>
</dbReference>
<dbReference type="GO" id="GO:0044185">
    <property type="term" value="C:host cell late endosome membrane"/>
    <property type="evidence" value="ECO:0007669"/>
    <property type="project" value="UniProtKB-SubCell"/>
</dbReference>
<dbReference type="GO" id="GO:0020002">
    <property type="term" value="C:host cell plasma membrane"/>
    <property type="evidence" value="ECO:0007669"/>
    <property type="project" value="UniProtKB-SubCell"/>
</dbReference>
<dbReference type="GO" id="GO:0072494">
    <property type="term" value="C:host multivesicular body"/>
    <property type="evidence" value="ECO:0007669"/>
    <property type="project" value="UniProtKB-SubCell"/>
</dbReference>
<dbReference type="GO" id="GO:0016020">
    <property type="term" value="C:membrane"/>
    <property type="evidence" value="ECO:0007669"/>
    <property type="project" value="UniProtKB-KW"/>
</dbReference>
<dbReference type="GO" id="GO:0019013">
    <property type="term" value="C:viral nucleocapsid"/>
    <property type="evidence" value="ECO:0007669"/>
    <property type="project" value="UniProtKB-KW"/>
</dbReference>
<dbReference type="GO" id="GO:0003723">
    <property type="term" value="F:RNA binding"/>
    <property type="evidence" value="ECO:0007669"/>
    <property type="project" value="UniProtKB-KW"/>
</dbReference>
<dbReference type="GO" id="GO:0008270">
    <property type="term" value="F:zinc ion binding"/>
    <property type="evidence" value="ECO:0007669"/>
    <property type="project" value="UniProtKB-KW"/>
</dbReference>
<dbReference type="GO" id="GO:0039702">
    <property type="term" value="P:viral budding via host ESCRT complex"/>
    <property type="evidence" value="ECO:0007669"/>
    <property type="project" value="UniProtKB-KW"/>
</dbReference>
<dbReference type="FunFam" id="1.10.150.180:FF:000001">
    <property type="entry name" value="Gag polyprotein"/>
    <property type="match status" value="1"/>
</dbReference>
<dbReference type="FunFam" id="1.10.375.10:FF:000008">
    <property type="entry name" value="Gag polyprotein"/>
    <property type="match status" value="1"/>
</dbReference>
<dbReference type="Gene3D" id="1.10.150.180">
    <property type="entry name" value="Gamma-retroviral matrix domain"/>
    <property type="match status" value="1"/>
</dbReference>
<dbReference type="Gene3D" id="1.10.375.10">
    <property type="entry name" value="Human Immunodeficiency Virus Type 1 Capsid Protein"/>
    <property type="match status" value="1"/>
</dbReference>
<dbReference type="Gene3D" id="4.10.60.10">
    <property type="entry name" value="Zinc finger, CCHC-type"/>
    <property type="match status" value="1"/>
</dbReference>
<dbReference type="InterPro" id="IPR000840">
    <property type="entry name" value="G_retro_matrix"/>
</dbReference>
<dbReference type="InterPro" id="IPR036946">
    <property type="entry name" value="G_retro_matrix_sf"/>
</dbReference>
<dbReference type="InterPro" id="IPR002079">
    <property type="entry name" value="Gag_p12"/>
</dbReference>
<dbReference type="InterPro" id="IPR003036">
    <property type="entry name" value="Gag_P30"/>
</dbReference>
<dbReference type="InterPro" id="IPR008919">
    <property type="entry name" value="Retrov_capsid_N"/>
</dbReference>
<dbReference type="InterPro" id="IPR050462">
    <property type="entry name" value="Retroviral_Gag-Pol_poly"/>
</dbReference>
<dbReference type="InterPro" id="IPR010999">
    <property type="entry name" value="Retrovr_matrix"/>
</dbReference>
<dbReference type="InterPro" id="IPR001878">
    <property type="entry name" value="Znf_CCHC"/>
</dbReference>
<dbReference type="InterPro" id="IPR036875">
    <property type="entry name" value="Znf_CCHC_sf"/>
</dbReference>
<dbReference type="PANTHER" id="PTHR33166">
    <property type="entry name" value="GAG_P30 DOMAIN-CONTAINING PROTEIN"/>
    <property type="match status" value="1"/>
</dbReference>
<dbReference type="Pfam" id="PF01140">
    <property type="entry name" value="Gag_MA"/>
    <property type="match status" value="1"/>
</dbReference>
<dbReference type="Pfam" id="PF01141">
    <property type="entry name" value="Gag_p12"/>
    <property type="match status" value="1"/>
</dbReference>
<dbReference type="Pfam" id="PF02093">
    <property type="entry name" value="Gag_p30"/>
    <property type="match status" value="1"/>
</dbReference>
<dbReference type="Pfam" id="PF00098">
    <property type="entry name" value="zf-CCHC"/>
    <property type="match status" value="1"/>
</dbReference>
<dbReference type="SMART" id="SM00343">
    <property type="entry name" value="ZnF_C2HC"/>
    <property type="match status" value="1"/>
</dbReference>
<dbReference type="SUPFAM" id="SSF47836">
    <property type="entry name" value="Retroviral matrix proteins"/>
    <property type="match status" value="1"/>
</dbReference>
<dbReference type="SUPFAM" id="SSF47943">
    <property type="entry name" value="Retrovirus capsid protein, N-terminal core domain"/>
    <property type="match status" value="1"/>
</dbReference>
<dbReference type="SUPFAM" id="SSF57756">
    <property type="entry name" value="Retrovirus zinc finger-like domains"/>
    <property type="match status" value="1"/>
</dbReference>
<dbReference type="PROSITE" id="PS50158">
    <property type="entry name" value="ZF_CCHC"/>
    <property type="match status" value="1"/>
</dbReference>
<comment type="function">
    <molecule>Gag polyprotein</molecule>
    <text evidence="2">Plays a role in budding and is processed by the viral protease during virion maturation outside the cell. During budding, it recruits, in a PPXY-dependent or independent manner, Nedd4-like ubiquitin ligases that conjugate ubiquitin molecules to Gag, or to Gag binding host factors. Interaction with HECT ubiquitin ligases probably link the viral protein to the host ESCRT pathway and facilitate release.</text>
</comment>
<comment type="function">
    <molecule>Matrix protein p15</molecule>
    <text evidence="2">Targets Gag and gag-pol polyproteins to the plasma membrane via a multipartite membrane binding signal, that includes its myristoylated N-terminus. Also mediates nuclear localization of the pre-integration complex.</text>
</comment>
<comment type="function">
    <molecule>Capsid protein p30</molecule>
    <text evidence="3">Forms the spherical core of the virion that encapsulates the genomic RNA-nucleocapsid complex.</text>
</comment>
<comment type="function">
    <molecule>Nucleocapsid protein p10-gag</molecule>
    <text evidence="2 4">Involved in the packaging and encapsidation of two copies of the genome (By similarity). Binds with high affinity to conserved UCUG elements within the packaging signal, located near the 5'-end of the genome (By similarity). This binding is dependent on genome dimerization (By similarity). Acts as a nucleic acid chaperone which is involved in rearrangement of nucleic acid secondary structures during gRNA retrotranscription (By similarity).</text>
</comment>
<comment type="subunit">
    <molecule>Gag polyprotein</molecule>
    <text evidence="2">Interacts (via PPXY motif) with host NEDD4 (By similarity). Interacts (via PSAP motif) with host TSG101 (By similarity). Interacts (via LYPX(n)L motif) with host PDCD6IP (By similarity).</text>
</comment>
<comment type="subunit">
    <molecule>Capsid protein p30</molecule>
    <text evidence="2">Homohexamer. Further associates as homomultimer. The virus core is composed of a lattice formed from hexagonal rings, each containing six capsid monomers.</text>
</comment>
<comment type="subcellular location">
    <molecule>Gag polyprotein</molecule>
    <subcellularLocation>
        <location evidence="1">Virion</location>
    </subcellularLocation>
    <subcellularLocation>
        <location evidence="8">Host cell membrane</location>
        <topology evidence="8">Lipid-anchor</topology>
    </subcellularLocation>
    <subcellularLocation>
        <location evidence="8">Host late endosome membrane</location>
        <topology evidence="8">Lipid-anchor</topology>
    </subcellularLocation>
    <subcellularLocation>
        <location evidence="1">Host endosome</location>
        <location evidence="1">Host multivesicular body</location>
    </subcellularLocation>
    <text evidence="1">These locations are probably linked to virus assembly sites.</text>
</comment>
<comment type="subcellular location">
    <molecule>Matrix protein p15</molecule>
    <subcellularLocation>
        <location evidence="8">Virion</location>
    </subcellularLocation>
</comment>
<comment type="subcellular location">
    <molecule>Capsid protein p30</molecule>
    <subcellularLocation>
        <location evidence="8">Virion</location>
    </subcellularLocation>
</comment>
<comment type="subcellular location">
    <molecule>Nucleocapsid protein p10-gag</molecule>
    <subcellularLocation>
        <location evidence="8">Virion</location>
    </subcellularLocation>
</comment>
<comment type="domain">
    <molecule>Gag polyprotein</molecule>
    <text evidence="2">Late-budding domains (L domains) are short sequence motifs essential for viral particle budding. They recruit proteins of the host ESCRT machinery (Endosomal Sorting Complex Required for Transport) or ESCRT-associated proteins. RNA-binding phosphoprotein p12 contains one L domain: a PPXY motif which interacts with the WW domain 3 of NEDD4 E3 ubiquitin ligase. PPXY motif is essential for virus egress. Matrix protein p15 contains one L domain: a PTAP/PSAP motif, which interacts with the UEV domain of TSG101. The junction between the matrix protein p15 and RNA-binding phosphoprotein p12 also contains one L domain: a LYPX(n)L motif which interacts with PDCD6IP. Both PSAP and LYPX(n)L domains might play little to no role in budding and possibly drive residual virus release.</text>
</comment>
<comment type="PTM">
    <molecule>Gag polyprotein</molecule>
    <text evidence="2">Specific enzymatic cleavages by the viral protease yield mature proteins. The protease is released by autocatalytic cleavage. The polyprotein is cleaved during and after budding, this process is termed maturation.</text>
</comment>
<comment type="PTM">
    <text evidence="1">RNA-binding phosphoprotein p12 is phosphorylated on serine residues.</text>
</comment>
<comment type="caution">
    <text evidence="9 10">Originally thought to be characterized from prostate tumors, the described gammaretrovirus XMRV is in fact laboratory-derived and there is no association of XMRV with prostate cancer.</text>
</comment>
<protein>
    <recommendedName>
        <fullName>Gag polyprotein</fullName>
        <shortName>Pr65gag</shortName>
    </recommendedName>
    <alternativeName>
        <fullName>Core polyprotein</fullName>
    </alternativeName>
    <component>
        <recommendedName>
            <fullName>Matrix protein p15</fullName>
            <shortName>MA</shortName>
        </recommendedName>
    </component>
    <component>
        <recommendedName>
            <fullName>RNA-binding phosphoprotein p12</fullName>
        </recommendedName>
        <alternativeName>
            <fullName>pp12</fullName>
        </alternativeName>
    </component>
    <component>
        <recommendedName>
            <fullName>Capsid protein p30</fullName>
            <shortName>CA</shortName>
        </recommendedName>
    </component>
    <component>
        <recommendedName>
            <fullName>Nucleocapsid protein p10-gag</fullName>
            <shortName>NC-gag</shortName>
        </recommendedName>
    </component>
</protein>
<organismHost>
    <name type="scientific">Homo sapiens</name>
    <name type="common">Human</name>
    <dbReference type="NCBI Taxonomy" id="9606"/>
</organismHost>
<feature type="initiator methionine" description="Removed; by host" evidence="1">
    <location>
        <position position="1"/>
    </location>
</feature>
<feature type="chain" id="PRO_0000390835" description="Gag polyprotein" evidence="1">
    <location>
        <begin position="2"/>
        <end position="536"/>
    </location>
</feature>
<feature type="chain" id="PRO_0000390836" description="Matrix protein p15" evidence="5">
    <location>
        <begin position="2"/>
        <end position="129"/>
    </location>
</feature>
<feature type="chain" id="PRO_0000390837" description="RNA-binding phosphoprotein p12" evidence="5">
    <location>
        <begin position="130"/>
        <end position="213"/>
    </location>
</feature>
<feature type="chain" id="PRO_0000390838" description="Capsid protein p30" evidence="5">
    <location>
        <begin position="214"/>
        <end position="476"/>
    </location>
</feature>
<feature type="chain" id="PRO_0000390839" description="Nucleocapsid protein p10-gag" evidence="5">
    <location>
        <begin position="477"/>
        <end position="536"/>
    </location>
</feature>
<feature type="zinc finger region" description="CCHC-type" evidence="6">
    <location>
        <begin position="500"/>
        <end position="517"/>
    </location>
</feature>
<feature type="region of interest" description="Disordered" evidence="7">
    <location>
        <begin position="139"/>
        <end position="218"/>
    </location>
</feature>
<feature type="region of interest" description="Interaction with mouse PIAS4" evidence="1">
    <location>
        <begin position="343"/>
        <end position="391"/>
    </location>
</feature>
<feature type="region of interest" description="Interaction with mouse UBE2I" evidence="1">
    <location>
        <begin position="428"/>
        <end position="433"/>
    </location>
</feature>
<feature type="region of interest" description="Disordered" evidence="7">
    <location>
        <begin position="449"/>
        <end position="536"/>
    </location>
</feature>
<feature type="coiled-coil region" evidence="5">
    <location>
        <begin position="436"/>
        <end position="476"/>
    </location>
</feature>
<feature type="short sequence motif" description="PTAP/PSAP motif">
    <location>
        <begin position="109"/>
        <end position="112"/>
    </location>
</feature>
<feature type="short sequence motif" description="LYPX(n)L motif">
    <location>
        <begin position="128"/>
        <end position="132"/>
    </location>
</feature>
<feature type="short sequence motif" description="PPXY motif">
    <location>
        <begin position="161"/>
        <end position="164"/>
    </location>
</feature>
<feature type="compositionally biased region" description="Basic and acidic residues" evidence="7">
    <location>
        <begin position="449"/>
        <end position="464"/>
    </location>
</feature>
<feature type="compositionally biased region" description="Basic and acidic residues" evidence="7">
    <location>
        <begin position="484"/>
        <end position="517"/>
    </location>
</feature>
<feature type="site" description="Cleavage; by viral protease p14" evidence="1">
    <location>
        <begin position="129"/>
        <end position="130"/>
    </location>
</feature>
<feature type="site" description="Cleavage; by viral protease p14" evidence="1">
    <location>
        <begin position="213"/>
        <end position="214"/>
    </location>
</feature>
<feature type="site" description="Cleavage; by viral protease p14" evidence="1">
    <location>
        <begin position="476"/>
        <end position="477"/>
    </location>
</feature>
<feature type="modified residue" description="Phosphoserine; by host" evidence="1">
    <location>
        <position position="190"/>
    </location>
</feature>
<feature type="lipid moiety-binding region" description="N-myristoyl glycine; by host" evidence="1">
    <location>
        <position position="2"/>
    </location>
</feature>
<accession>Q2F7J2</accession>
<gene>
    <name type="primary">gag</name>
</gene>
<keyword id="KW-0167">Capsid protein</keyword>
<keyword id="KW-0175">Coiled coil</keyword>
<keyword id="KW-1032">Host cell membrane</keyword>
<keyword id="KW-1039">Host endosome</keyword>
<keyword id="KW-1043">Host membrane</keyword>
<keyword id="KW-0945">Host-virus interaction</keyword>
<keyword id="KW-0449">Lipoprotein</keyword>
<keyword id="KW-0472">Membrane</keyword>
<keyword id="KW-0479">Metal-binding</keyword>
<keyword id="KW-0519">Myristate</keyword>
<keyword id="KW-0597">Phosphoprotein</keyword>
<keyword id="KW-0694">RNA-binding</keyword>
<keyword id="KW-1198">Viral budding</keyword>
<keyword id="KW-1187">Viral budding via the host ESCRT complexes</keyword>
<keyword id="KW-0543">Viral nucleoprotein</keyword>
<keyword id="KW-1188">Viral release from host cell</keyword>
<keyword id="KW-0946">Virion</keyword>
<keyword id="KW-0862">Zinc</keyword>
<keyword id="KW-0863">Zinc-finger</keyword>
<sequence length="536" mass="60391">MGQTVTTPLSLTLQHWGDVQRIASNQSVDVKKRRWVTFCSAEWPTFNVGWPQDGTFNLGVISQVKSRVFCPGPHGHPDQVPYIVTWEALAYDPPPWVKPFVSPKPPPLPTAPVLPPGPSAQPPSRSALYPALTLSIKSKPPKPQVLPDSGGPLIDLLTEDPPPYGVQPSSSARENNEEEAATTSEVSPPSPMVSRLRGRRDPPAADSTTSQAFPLRMGGDGQLQYWPFSSSDLYNWKNNNPSFSEDPGKLTALIESVLITHQPTWDDCQQLLGTLLTGEEKQRVLLEAGKAVRGNDGRPTQLPNEVNAAFPLERPDWDYTTTEGRNHLVLYRQLLLAGLQNAGRSPTNLAKVKGITQGPNESPSAFLERLKEAYRRYTPYDPEDPGQETNVSMSFIWQSAPDIGRKLERLEDLKSKTLGDLVREAEKIFNKRETPEEREERIRREIEEKEERRRAEDEQRERERDRRRHREMSKLLATVVIGQRQDRQGGERRRPQLDKDQCAYCKEKGHWAKDCPKKPRGPRGPRPQTSLLTLGD</sequence>
<reference key="1">
    <citation type="journal article" date="2006" name="PLoS Pathog.">
        <title>Identification of a novel Gammaretrovirus in prostate tumors of patients homozygous for R462Q RNASEL variant.</title>
        <authorList>
            <person name="Urisman A."/>
            <person name="Molinaro R.J."/>
            <person name="Fischer N."/>
            <person name="Plummer S.J."/>
            <person name="Casey G."/>
            <person name="Klein E.A."/>
            <person name="Malathi K."/>
            <person name="Magi-Galluzzi C."/>
            <person name="Tubbs R.R."/>
            <person name="Ganem D."/>
            <person name="Silverman R.H."/>
            <person name="DeRisi J.L."/>
        </authorList>
    </citation>
    <scope>NUCLEOTIDE SEQUENCE [GENOMIC RNA]</scope>
    <scope>RETRACTED PAPER</scope>
</reference>
<reference key="2">
    <citation type="journal article" date="2012" name="PLoS Pathog.">
        <authorList>
            <person name="Urisman A."/>
            <person name="Molinaro R.J."/>
            <person name="Fischer N."/>
            <person name="Plummer S.J."/>
            <person name="Casey G."/>
            <person name="Klein E.A."/>
            <person name="Malathi K."/>
            <person name="Magi-Galluzzi C."/>
            <person name="Tubbs R.R."/>
            <person name="Ganem D."/>
            <person name="Silverman R.H."/>
            <person name="DeRisi J.L."/>
        </authorList>
    </citation>
    <scope>RETRACTION NOTICE OF PUBMED:16609730</scope>
</reference>
<proteinExistence type="inferred from homology"/>
<name>GAG_XMRV3</name>
<organism>
    <name type="scientific">Xenotropic MuLV-related virus (isolate VP35)</name>
    <name type="common">XMRV</name>
    <dbReference type="NCBI Taxonomy" id="356663"/>
    <lineage>
        <taxon>Viruses</taxon>
        <taxon>Riboviria</taxon>
        <taxon>Pararnavirae</taxon>
        <taxon>Artverviricota</taxon>
        <taxon>Revtraviricetes</taxon>
        <taxon>Ortervirales</taxon>
        <taxon>Retroviridae</taxon>
        <taxon>Orthoretrovirinae</taxon>
        <taxon>Gammaretrovirus</taxon>
        <taxon>Murine leukemia-related retroviruses</taxon>
    </lineage>
</organism>